<name>VWA1_BOVIN</name>
<protein>
    <recommendedName>
        <fullName>von Willebrand factor A domain-containing protein 1</fullName>
    </recommendedName>
</protein>
<accession>A6QLN9</accession>
<reference key="1">
    <citation type="submission" date="2007-06" db="EMBL/GenBank/DDBJ databases">
        <authorList>
            <consortium name="NIH - Mammalian Gene Collection (MGC) project"/>
        </authorList>
    </citation>
    <scope>NUCLEOTIDE SEQUENCE [LARGE SCALE MRNA]</scope>
    <source>
        <strain>Hereford</strain>
        <tissue>Uterus</tissue>
    </source>
</reference>
<evidence type="ECO:0000250" key="1">
    <source>
        <dbReference type="UniProtKB" id="E7FF10"/>
    </source>
</evidence>
<evidence type="ECO:0000250" key="2">
    <source>
        <dbReference type="UniProtKB" id="Q6PCB0"/>
    </source>
</evidence>
<evidence type="ECO:0000250" key="3">
    <source>
        <dbReference type="UniProtKB" id="Q8R2Z5"/>
    </source>
</evidence>
<evidence type="ECO:0000255" key="4"/>
<evidence type="ECO:0000255" key="5">
    <source>
        <dbReference type="PROSITE-ProRule" id="PRU00219"/>
    </source>
</evidence>
<evidence type="ECO:0000255" key="6">
    <source>
        <dbReference type="PROSITE-ProRule" id="PRU00316"/>
    </source>
</evidence>
<evidence type="ECO:0000256" key="7">
    <source>
        <dbReference type="SAM" id="MobiDB-lite"/>
    </source>
</evidence>
<keyword id="KW-0084">Basement membrane</keyword>
<keyword id="KW-1015">Disulfide bond</keyword>
<keyword id="KW-0272">Extracellular matrix</keyword>
<keyword id="KW-0325">Glycoprotein</keyword>
<keyword id="KW-0597">Phosphoprotein</keyword>
<keyword id="KW-1185">Reference proteome</keyword>
<keyword id="KW-0677">Repeat</keyword>
<keyword id="KW-0964">Secreted</keyword>
<keyword id="KW-0732">Signal</keyword>
<proteinExistence type="evidence at transcript level"/>
<feature type="signal peptide" evidence="4">
    <location>
        <begin position="1"/>
        <end position="20"/>
    </location>
</feature>
<feature type="chain" id="PRO_0000307155" description="von Willebrand factor A domain-containing protein 1">
    <location>
        <begin position="21"/>
        <end position="413"/>
    </location>
</feature>
<feature type="domain" description="VWFA" evidence="5">
    <location>
        <begin position="32"/>
        <end position="211"/>
    </location>
</feature>
<feature type="domain" description="Fibronectin type-III 1" evidence="6">
    <location>
        <begin position="212"/>
        <end position="302"/>
    </location>
</feature>
<feature type="domain" description="Fibronectin type-III 2" evidence="6">
    <location>
        <begin position="305"/>
        <end position="395"/>
    </location>
</feature>
<feature type="region of interest" description="Disordered" evidence="7">
    <location>
        <begin position="385"/>
        <end position="413"/>
    </location>
</feature>
<feature type="modified residue" description="Phosphoserine" evidence="2">
    <location>
        <position position="72"/>
    </location>
</feature>
<feature type="modified residue" description="Phosphoserine" evidence="2">
    <location>
        <position position="78"/>
    </location>
</feature>
<feature type="modified residue" description="Phosphoserine" evidence="2">
    <location>
        <position position="91"/>
    </location>
</feature>
<feature type="glycosylation site" description="N-linked (GlcNAc...) asparagine" evidence="4">
    <location>
        <position position="262"/>
    </location>
</feature>
<organism>
    <name type="scientific">Bos taurus</name>
    <name type="common">Bovine</name>
    <dbReference type="NCBI Taxonomy" id="9913"/>
    <lineage>
        <taxon>Eukaryota</taxon>
        <taxon>Metazoa</taxon>
        <taxon>Chordata</taxon>
        <taxon>Craniata</taxon>
        <taxon>Vertebrata</taxon>
        <taxon>Euteleostomi</taxon>
        <taxon>Mammalia</taxon>
        <taxon>Eutheria</taxon>
        <taxon>Laurasiatheria</taxon>
        <taxon>Artiodactyla</taxon>
        <taxon>Ruminantia</taxon>
        <taxon>Pecora</taxon>
        <taxon>Bovidae</taxon>
        <taxon>Bovinae</taxon>
        <taxon>Bos</taxon>
    </lineage>
</organism>
<comment type="function">
    <text evidence="1 3">Promotes matrix assembly (By similarity). Involved in the organization of skeletal muscles and in the formation of neuromuscular junctions (By similarity).</text>
</comment>
<comment type="subunit">
    <text evidence="3">Homodimer or homomultimer; disulfide-linked. Interacts with HSPG2.</text>
</comment>
<comment type="subcellular location">
    <subcellularLocation>
        <location evidence="3">Secreted</location>
        <location evidence="3">Extracellular space</location>
        <location evidence="3">Extracellular matrix</location>
        <location evidence="3">Basement membrane</location>
    </subcellularLocation>
</comment>
<comment type="PTM">
    <text evidence="3">N-glycosylated.</text>
</comment>
<sequence>MLPWTVIGLALSLRLARSGAERGLPASALQGDLLFLLDSSASVSHYEFNRVREFLGRLAALLPVGPGALRASLVHVGSRPHTEFPFGQHSSGSAVQDAIRAAAQRMGDTNTGLALAYAKKQLFAKAAGARPGVPKVLVWVTDGGSSDPVGPPMQELKDLGVTVFIVSTGRGNLLELSAAASAPAEKHLHFVDVDDLHIITQALRGSILDAMWPQQLHASEVTSSGFRLAWPSLLTADSGYYVLELAPSTDPGAARRQQLPGNATGWAWTGLDSDTDYDVALVPESNVRLLRSQHLRVRTLPEETGPELIVVSHTRPRSLRVSWAPALGPDAALGYHVQVGPLRGGAAQSVEVPAGENSTTLQGLAPGTAYLVTVTAAFRSGRERALSAKACTPEGERSRAPRPQPQRTGGREP</sequence>
<dbReference type="EMBL" id="BC148033">
    <property type="protein sequence ID" value="AAI48034.1"/>
    <property type="molecule type" value="mRNA"/>
</dbReference>
<dbReference type="RefSeq" id="NP_001096700.1">
    <property type="nucleotide sequence ID" value="NM_001103230.1"/>
</dbReference>
<dbReference type="SMR" id="A6QLN9"/>
<dbReference type="FunCoup" id="A6QLN9">
    <property type="interactions" value="103"/>
</dbReference>
<dbReference type="STRING" id="9913.ENSBTAP00000028372"/>
<dbReference type="GlyCosmos" id="A6QLN9">
    <property type="glycosylation" value="1 site, No reported glycans"/>
</dbReference>
<dbReference type="GlyGen" id="A6QLN9">
    <property type="glycosylation" value="1 site"/>
</dbReference>
<dbReference type="PaxDb" id="9913-ENSBTAP00000028372"/>
<dbReference type="GeneID" id="505917"/>
<dbReference type="KEGG" id="bta:505917"/>
<dbReference type="CTD" id="64856"/>
<dbReference type="eggNOG" id="KOG1217">
    <property type="taxonomic scope" value="Eukaryota"/>
</dbReference>
<dbReference type="eggNOG" id="KOG3544">
    <property type="taxonomic scope" value="Eukaryota"/>
</dbReference>
<dbReference type="HOGENOM" id="CLU_042926_0_0_1"/>
<dbReference type="InParanoid" id="A6QLN9"/>
<dbReference type="OrthoDB" id="9949424at2759"/>
<dbReference type="TreeFam" id="TF316402"/>
<dbReference type="Proteomes" id="UP000009136">
    <property type="component" value="Unplaced"/>
</dbReference>
<dbReference type="GO" id="GO:0005604">
    <property type="term" value="C:basement membrane"/>
    <property type="evidence" value="ECO:0007669"/>
    <property type="project" value="UniProtKB-SubCell"/>
</dbReference>
<dbReference type="GO" id="GO:0062023">
    <property type="term" value="C:collagen-containing extracellular matrix"/>
    <property type="evidence" value="ECO:0000318"/>
    <property type="project" value="GO_Central"/>
</dbReference>
<dbReference type="GO" id="GO:0005576">
    <property type="term" value="C:extracellular region"/>
    <property type="evidence" value="ECO:0007669"/>
    <property type="project" value="UniProtKB-KW"/>
</dbReference>
<dbReference type="GO" id="GO:0005840">
    <property type="term" value="C:ribosome"/>
    <property type="evidence" value="ECO:0007669"/>
    <property type="project" value="InterPro"/>
</dbReference>
<dbReference type="GO" id="GO:0003735">
    <property type="term" value="F:structural constituent of ribosome"/>
    <property type="evidence" value="ECO:0007669"/>
    <property type="project" value="InterPro"/>
</dbReference>
<dbReference type="GO" id="GO:0006412">
    <property type="term" value="P:translation"/>
    <property type="evidence" value="ECO:0007669"/>
    <property type="project" value="InterPro"/>
</dbReference>
<dbReference type="CDD" id="cd00063">
    <property type="entry name" value="FN3"/>
    <property type="match status" value="1"/>
</dbReference>
<dbReference type="CDD" id="cd01472">
    <property type="entry name" value="vWA_collagen"/>
    <property type="match status" value="1"/>
</dbReference>
<dbReference type="FunFam" id="2.60.40.10:FF:001442">
    <property type="entry name" value="von Willebrand factor A domain containing 1"/>
    <property type="match status" value="1"/>
</dbReference>
<dbReference type="FunFam" id="2.60.40.10:FF:000638">
    <property type="entry name" value="von Willebrand factor A domain-containing 1"/>
    <property type="match status" value="1"/>
</dbReference>
<dbReference type="FunFam" id="3.40.50.410:FF:000046">
    <property type="entry name" value="von Willebrand factor A domain-containing protein 1"/>
    <property type="match status" value="1"/>
</dbReference>
<dbReference type="Gene3D" id="2.60.40.10">
    <property type="entry name" value="Immunoglobulins"/>
    <property type="match status" value="2"/>
</dbReference>
<dbReference type="Gene3D" id="3.40.50.410">
    <property type="entry name" value="von Willebrand factor, type A domain"/>
    <property type="match status" value="1"/>
</dbReference>
<dbReference type="InterPro" id="IPR050525">
    <property type="entry name" value="ECM_Assembly_Org"/>
</dbReference>
<dbReference type="InterPro" id="IPR003961">
    <property type="entry name" value="FN3_dom"/>
</dbReference>
<dbReference type="InterPro" id="IPR036116">
    <property type="entry name" value="FN3_sf"/>
</dbReference>
<dbReference type="InterPro" id="IPR013783">
    <property type="entry name" value="Ig-like_fold"/>
</dbReference>
<dbReference type="InterPro" id="IPR020592">
    <property type="entry name" value="Ribosomal_bS16_CS"/>
</dbReference>
<dbReference type="InterPro" id="IPR002035">
    <property type="entry name" value="VWF_A"/>
</dbReference>
<dbReference type="InterPro" id="IPR036465">
    <property type="entry name" value="vWFA_dom_sf"/>
</dbReference>
<dbReference type="PANTHER" id="PTHR24020">
    <property type="entry name" value="COLLAGEN ALPHA"/>
    <property type="match status" value="1"/>
</dbReference>
<dbReference type="PANTHER" id="PTHR24020:SF77">
    <property type="entry name" value="VON WILLEBRAND FACTOR A DOMAIN-CONTAINING PROTEIN 1"/>
    <property type="match status" value="1"/>
</dbReference>
<dbReference type="Pfam" id="PF00041">
    <property type="entry name" value="fn3"/>
    <property type="match status" value="1"/>
</dbReference>
<dbReference type="Pfam" id="PF00092">
    <property type="entry name" value="VWA"/>
    <property type="match status" value="1"/>
</dbReference>
<dbReference type="PRINTS" id="PR00453">
    <property type="entry name" value="VWFADOMAIN"/>
</dbReference>
<dbReference type="SMART" id="SM00060">
    <property type="entry name" value="FN3"/>
    <property type="match status" value="1"/>
</dbReference>
<dbReference type="SMART" id="SM00327">
    <property type="entry name" value="VWA"/>
    <property type="match status" value="1"/>
</dbReference>
<dbReference type="SUPFAM" id="SSF49265">
    <property type="entry name" value="Fibronectin type III"/>
    <property type="match status" value="2"/>
</dbReference>
<dbReference type="SUPFAM" id="SSF53300">
    <property type="entry name" value="vWA-like"/>
    <property type="match status" value="1"/>
</dbReference>
<dbReference type="PROSITE" id="PS50853">
    <property type="entry name" value="FN3"/>
    <property type="match status" value="2"/>
</dbReference>
<dbReference type="PROSITE" id="PS50234">
    <property type="entry name" value="VWFA"/>
    <property type="match status" value="1"/>
</dbReference>
<gene>
    <name type="primary">VWA1</name>
</gene>